<name>END4_STRCO</name>
<proteinExistence type="inferred from homology"/>
<dbReference type="EC" id="3.1.21.2" evidence="1"/>
<dbReference type="EMBL" id="AL939111">
    <property type="protein sequence ID" value="CAB51959.1"/>
    <property type="molecule type" value="Genomic_DNA"/>
</dbReference>
<dbReference type="PIR" id="T35492">
    <property type="entry name" value="T35492"/>
</dbReference>
<dbReference type="RefSeq" id="NP_626368.1">
    <property type="nucleotide sequence ID" value="NC_003888.3"/>
</dbReference>
<dbReference type="RefSeq" id="WP_003976705.1">
    <property type="nucleotide sequence ID" value="NZ_VNID01000001.1"/>
</dbReference>
<dbReference type="SMR" id="Q9S2N2"/>
<dbReference type="FunCoup" id="Q9S2N2">
    <property type="interactions" value="42"/>
</dbReference>
<dbReference type="STRING" id="100226.gene:17759709"/>
<dbReference type="PaxDb" id="100226-SCO2111"/>
<dbReference type="KEGG" id="sco:SCO2111"/>
<dbReference type="PATRIC" id="fig|100226.15.peg.2145"/>
<dbReference type="eggNOG" id="COG0648">
    <property type="taxonomic scope" value="Bacteria"/>
</dbReference>
<dbReference type="HOGENOM" id="CLU_025885_0_1_11"/>
<dbReference type="InParanoid" id="Q9S2N2"/>
<dbReference type="OrthoDB" id="9805666at2"/>
<dbReference type="PhylomeDB" id="Q9S2N2"/>
<dbReference type="Proteomes" id="UP000001973">
    <property type="component" value="Chromosome"/>
</dbReference>
<dbReference type="GO" id="GO:0008833">
    <property type="term" value="F:deoxyribonuclease IV (phage-T4-induced) activity"/>
    <property type="evidence" value="ECO:0007669"/>
    <property type="project" value="UniProtKB-UniRule"/>
</dbReference>
<dbReference type="GO" id="GO:0003677">
    <property type="term" value="F:DNA binding"/>
    <property type="evidence" value="ECO:0007669"/>
    <property type="project" value="InterPro"/>
</dbReference>
<dbReference type="GO" id="GO:0003906">
    <property type="term" value="F:DNA-(apurinic or apyrimidinic site) endonuclease activity"/>
    <property type="evidence" value="ECO:0000318"/>
    <property type="project" value="GO_Central"/>
</dbReference>
<dbReference type="GO" id="GO:0008081">
    <property type="term" value="F:phosphoric diester hydrolase activity"/>
    <property type="evidence" value="ECO:0000318"/>
    <property type="project" value="GO_Central"/>
</dbReference>
<dbReference type="GO" id="GO:0008270">
    <property type="term" value="F:zinc ion binding"/>
    <property type="evidence" value="ECO:0007669"/>
    <property type="project" value="UniProtKB-UniRule"/>
</dbReference>
<dbReference type="GO" id="GO:0006284">
    <property type="term" value="P:base-excision repair"/>
    <property type="evidence" value="ECO:0000318"/>
    <property type="project" value="GO_Central"/>
</dbReference>
<dbReference type="CDD" id="cd00019">
    <property type="entry name" value="AP2Ec"/>
    <property type="match status" value="1"/>
</dbReference>
<dbReference type="FunFam" id="3.20.20.150:FF:000031">
    <property type="entry name" value="Probable endonuclease 4"/>
    <property type="match status" value="1"/>
</dbReference>
<dbReference type="Gene3D" id="3.20.20.150">
    <property type="entry name" value="Divalent-metal-dependent TIM barrel enzymes"/>
    <property type="match status" value="1"/>
</dbReference>
<dbReference type="HAMAP" id="MF_00152">
    <property type="entry name" value="Nfo"/>
    <property type="match status" value="1"/>
</dbReference>
<dbReference type="InterPro" id="IPR001719">
    <property type="entry name" value="AP_endonuc_2"/>
</dbReference>
<dbReference type="InterPro" id="IPR018246">
    <property type="entry name" value="AP_endonuc_F2_Zn_BS"/>
</dbReference>
<dbReference type="InterPro" id="IPR036237">
    <property type="entry name" value="Xyl_isomerase-like_sf"/>
</dbReference>
<dbReference type="InterPro" id="IPR013022">
    <property type="entry name" value="Xyl_isomerase-like_TIM-brl"/>
</dbReference>
<dbReference type="NCBIfam" id="TIGR00587">
    <property type="entry name" value="nfo"/>
    <property type="match status" value="1"/>
</dbReference>
<dbReference type="PANTHER" id="PTHR21445:SF0">
    <property type="entry name" value="APURINIC-APYRIMIDINIC ENDONUCLEASE"/>
    <property type="match status" value="1"/>
</dbReference>
<dbReference type="PANTHER" id="PTHR21445">
    <property type="entry name" value="ENDONUCLEASE IV ENDODEOXYRIBONUCLEASE IV"/>
    <property type="match status" value="1"/>
</dbReference>
<dbReference type="Pfam" id="PF01261">
    <property type="entry name" value="AP_endonuc_2"/>
    <property type="match status" value="1"/>
</dbReference>
<dbReference type="SMART" id="SM00518">
    <property type="entry name" value="AP2Ec"/>
    <property type="match status" value="1"/>
</dbReference>
<dbReference type="SUPFAM" id="SSF51658">
    <property type="entry name" value="Xylose isomerase-like"/>
    <property type="match status" value="1"/>
</dbReference>
<dbReference type="PROSITE" id="PS00729">
    <property type="entry name" value="AP_NUCLEASE_F2_1"/>
    <property type="match status" value="1"/>
</dbReference>
<dbReference type="PROSITE" id="PS00730">
    <property type="entry name" value="AP_NUCLEASE_F2_2"/>
    <property type="match status" value="1"/>
</dbReference>
<dbReference type="PROSITE" id="PS00731">
    <property type="entry name" value="AP_NUCLEASE_F2_3"/>
    <property type="match status" value="1"/>
</dbReference>
<dbReference type="PROSITE" id="PS51432">
    <property type="entry name" value="AP_NUCLEASE_F2_4"/>
    <property type="match status" value="1"/>
</dbReference>
<sequence length="294" mass="31070">MSTASSSSSLPRNPVGGHVPVAGGLHSVGLSYARELKAEAVQVFVANPRGWATPAGNPKQDEAFREACAAGSVPAYVHAPYLINFGSHTGATVERSVESLRHSLRRGRAIGALGVVVHTGSATGGRERPVALKQVREHMLPLLDELTHDDDPYLLLESTAGQGASLCSRTWDFGPYFEALDAHPKLGVCLDTCHIFAAGHDLTGPSGMHQTLDLLVDTVGEGRLRLIHANDSKDVAGAHKDRHENIGAGHIGEDPFRALMTHPATDGVPLVIETPGGKEGHAADVARLKKLRDG</sequence>
<keyword id="KW-0227">DNA damage</keyword>
<keyword id="KW-0234">DNA repair</keyword>
<keyword id="KW-0255">Endonuclease</keyword>
<keyword id="KW-0378">Hydrolase</keyword>
<keyword id="KW-0479">Metal-binding</keyword>
<keyword id="KW-0540">Nuclease</keyword>
<keyword id="KW-1185">Reference proteome</keyword>
<keyword id="KW-0862">Zinc</keyword>
<evidence type="ECO:0000255" key="1">
    <source>
        <dbReference type="HAMAP-Rule" id="MF_00152"/>
    </source>
</evidence>
<feature type="chain" id="PRO_0000190878" description="Probable endonuclease 4">
    <location>
        <begin position="1"/>
        <end position="294"/>
    </location>
</feature>
<feature type="binding site" evidence="1">
    <location>
        <position position="78"/>
    </location>
    <ligand>
        <name>Zn(2+)</name>
        <dbReference type="ChEBI" id="CHEBI:29105"/>
        <label>1</label>
    </ligand>
</feature>
<feature type="binding site" evidence="1">
    <location>
        <position position="118"/>
    </location>
    <ligand>
        <name>Zn(2+)</name>
        <dbReference type="ChEBI" id="CHEBI:29105"/>
        <label>1</label>
    </ligand>
</feature>
<feature type="binding site" evidence="1">
    <location>
        <position position="157"/>
    </location>
    <ligand>
        <name>Zn(2+)</name>
        <dbReference type="ChEBI" id="CHEBI:29105"/>
        <label>1</label>
    </ligand>
</feature>
<feature type="binding site" evidence="1">
    <location>
        <position position="157"/>
    </location>
    <ligand>
        <name>Zn(2+)</name>
        <dbReference type="ChEBI" id="CHEBI:29105"/>
        <label>2</label>
    </ligand>
</feature>
<feature type="binding site" evidence="1">
    <location>
        <position position="191"/>
    </location>
    <ligand>
        <name>Zn(2+)</name>
        <dbReference type="ChEBI" id="CHEBI:29105"/>
        <label>2</label>
    </ligand>
</feature>
<feature type="binding site" evidence="1">
    <location>
        <position position="194"/>
    </location>
    <ligand>
        <name>Zn(2+)</name>
        <dbReference type="ChEBI" id="CHEBI:29105"/>
        <label>3</label>
    </ligand>
</feature>
<feature type="binding site" evidence="1">
    <location>
        <position position="228"/>
    </location>
    <ligand>
        <name>Zn(2+)</name>
        <dbReference type="ChEBI" id="CHEBI:29105"/>
        <label>2</label>
    </ligand>
</feature>
<feature type="binding site" evidence="1">
    <location>
        <position position="241"/>
    </location>
    <ligand>
        <name>Zn(2+)</name>
        <dbReference type="ChEBI" id="CHEBI:29105"/>
        <label>3</label>
    </ligand>
</feature>
<feature type="binding site" evidence="1">
    <location>
        <position position="243"/>
    </location>
    <ligand>
        <name>Zn(2+)</name>
        <dbReference type="ChEBI" id="CHEBI:29105"/>
        <label>3</label>
    </ligand>
</feature>
<feature type="binding site" evidence="1">
    <location>
        <position position="273"/>
    </location>
    <ligand>
        <name>Zn(2+)</name>
        <dbReference type="ChEBI" id="CHEBI:29105"/>
        <label>2</label>
    </ligand>
</feature>
<accession>Q9S2N2</accession>
<gene>
    <name evidence="1" type="primary">nfo</name>
    <name type="ordered locus">SCO2111</name>
    <name type="ORF">SC6E10.05</name>
</gene>
<organism>
    <name type="scientific">Streptomyces coelicolor (strain ATCC BAA-471 / A3(2) / M145)</name>
    <dbReference type="NCBI Taxonomy" id="100226"/>
    <lineage>
        <taxon>Bacteria</taxon>
        <taxon>Bacillati</taxon>
        <taxon>Actinomycetota</taxon>
        <taxon>Actinomycetes</taxon>
        <taxon>Kitasatosporales</taxon>
        <taxon>Streptomycetaceae</taxon>
        <taxon>Streptomyces</taxon>
        <taxon>Streptomyces albidoflavus group</taxon>
    </lineage>
</organism>
<reference key="1">
    <citation type="journal article" date="2002" name="Nature">
        <title>Complete genome sequence of the model actinomycete Streptomyces coelicolor A3(2).</title>
        <authorList>
            <person name="Bentley S.D."/>
            <person name="Chater K.F."/>
            <person name="Cerdeno-Tarraga A.-M."/>
            <person name="Challis G.L."/>
            <person name="Thomson N.R."/>
            <person name="James K.D."/>
            <person name="Harris D.E."/>
            <person name="Quail M.A."/>
            <person name="Kieser H."/>
            <person name="Harper D."/>
            <person name="Bateman A."/>
            <person name="Brown S."/>
            <person name="Chandra G."/>
            <person name="Chen C.W."/>
            <person name="Collins M."/>
            <person name="Cronin A."/>
            <person name="Fraser A."/>
            <person name="Goble A."/>
            <person name="Hidalgo J."/>
            <person name="Hornsby T."/>
            <person name="Howarth S."/>
            <person name="Huang C.-H."/>
            <person name="Kieser T."/>
            <person name="Larke L."/>
            <person name="Murphy L.D."/>
            <person name="Oliver K."/>
            <person name="O'Neil S."/>
            <person name="Rabbinowitsch E."/>
            <person name="Rajandream M.A."/>
            <person name="Rutherford K.M."/>
            <person name="Rutter S."/>
            <person name="Seeger K."/>
            <person name="Saunders D."/>
            <person name="Sharp S."/>
            <person name="Squares R."/>
            <person name="Squares S."/>
            <person name="Taylor K."/>
            <person name="Warren T."/>
            <person name="Wietzorrek A."/>
            <person name="Woodward J.R."/>
            <person name="Barrell B.G."/>
            <person name="Parkhill J."/>
            <person name="Hopwood D.A."/>
        </authorList>
    </citation>
    <scope>NUCLEOTIDE SEQUENCE [LARGE SCALE GENOMIC DNA]</scope>
    <source>
        <strain>ATCC BAA-471 / A3(2) / M145</strain>
    </source>
</reference>
<protein>
    <recommendedName>
        <fullName evidence="1">Probable endonuclease 4</fullName>
        <ecNumber evidence="1">3.1.21.2</ecNumber>
    </recommendedName>
    <alternativeName>
        <fullName evidence="1">Endodeoxyribonuclease IV</fullName>
    </alternativeName>
    <alternativeName>
        <fullName evidence="1">Endonuclease IV</fullName>
    </alternativeName>
</protein>
<comment type="function">
    <text evidence="1">Endonuclease IV plays a role in DNA repair. It cleaves phosphodiester bonds at apurinic or apyrimidinic (AP) sites, generating a 3'-hydroxyl group and a 5'-terminal sugar phosphate.</text>
</comment>
<comment type="catalytic activity">
    <reaction evidence="1">
        <text>Endonucleolytic cleavage to 5'-phosphooligonucleotide end-products.</text>
        <dbReference type="EC" id="3.1.21.2"/>
    </reaction>
</comment>
<comment type="cofactor">
    <cofactor evidence="1">
        <name>Zn(2+)</name>
        <dbReference type="ChEBI" id="CHEBI:29105"/>
    </cofactor>
    <text evidence="1">Binds 3 Zn(2+) ions.</text>
</comment>
<comment type="similarity">
    <text evidence="1">Belongs to the AP endonuclease 2 family.</text>
</comment>